<comment type="function">
    <text evidence="1 6 8">Component of a protein kinase signal transduction cascade. Regulates the JNK and ERK5 pathways by phosphorylating and activating MAP2K5 and MAP2K7 (By similarity). Plays a role in caveolae kiss-and-run dynamics.</text>
</comment>
<comment type="catalytic activity">
    <reaction>
        <text>L-seryl-[protein] + ATP = O-phospho-L-seryl-[protein] + ADP + H(+)</text>
        <dbReference type="Rhea" id="RHEA:17989"/>
        <dbReference type="Rhea" id="RHEA-COMP:9863"/>
        <dbReference type="Rhea" id="RHEA-COMP:11604"/>
        <dbReference type="ChEBI" id="CHEBI:15378"/>
        <dbReference type="ChEBI" id="CHEBI:29999"/>
        <dbReference type="ChEBI" id="CHEBI:30616"/>
        <dbReference type="ChEBI" id="CHEBI:83421"/>
        <dbReference type="ChEBI" id="CHEBI:456216"/>
        <dbReference type="EC" id="2.7.11.25"/>
    </reaction>
</comment>
<comment type="catalytic activity">
    <reaction>
        <text>L-threonyl-[protein] + ATP = O-phospho-L-threonyl-[protein] + ADP + H(+)</text>
        <dbReference type="Rhea" id="RHEA:46608"/>
        <dbReference type="Rhea" id="RHEA-COMP:11060"/>
        <dbReference type="Rhea" id="RHEA-COMP:11605"/>
        <dbReference type="ChEBI" id="CHEBI:15378"/>
        <dbReference type="ChEBI" id="CHEBI:30013"/>
        <dbReference type="ChEBI" id="CHEBI:30616"/>
        <dbReference type="ChEBI" id="CHEBI:61977"/>
        <dbReference type="ChEBI" id="CHEBI:456216"/>
        <dbReference type="EC" id="2.7.11.25"/>
    </reaction>
</comment>
<comment type="cofactor">
    <cofactor>
        <name>Mg(2+)</name>
        <dbReference type="ChEBI" id="CHEBI:18420"/>
    </cofactor>
</comment>
<comment type="activity regulation">
    <text evidence="1">Activated by phosphorylation on Thr-524.</text>
</comment>
<comment type="subunit">
    <text evidence="1 6 10 11">Interacts with PKN2; the interaction activates PKN2 kinase activity in a MAP3K2-independent kinase activity (By similarity). Self-associates. Binds both upstream activators and downstream substrates in multimolecular complexes. Interacts (via the kinase catalytic domain) with STK38. Interacts with XIAP/BIRC4.</text>
</comment>
<comment type="interaction">
    <interactant intactId="EBI-357393">
        <id>Q9Y2U5</id>
    </interactant>
    <interactant intactId="EBI-307294">
        <id>Q13163</id>
        <label>MAP2K5</label>
    </interactant>
    <organismsDiffer>false</organismsDiffer>
    <experiments>7</experiments>
</comment>
<comment type="interaction">
    <interactant intactId="EBI-357393">
        <id>Q9Y2U5</id>
    </interactant>
    <interactant intactId="EBI-476295">
        <id>P31947</id>
        <label>SFN</label>
    </interactant>
    <organismsDiffer>false</organismsDiffer>
    <experiments>3</experiments>
</comment>
<comment type="interaction">
    <interactant intactId="EBI-357393">
        <id>Q9Y2U5</id>
    </interactant>
    <interactant intactId="EBI-16204880">
        <id>Q9H7B4-1</id>
        <label>SMYD3</label>
    </interactant>
    <organismsDiffer>false</organismsDiffer>
    <experiments>3</experiments>
</comment>
<comment type="interaction">
    <interactant intactId="EBI-357393">
        <id>Q9Y2U5</id>
    </interactant>
    <interactant intactId="EBI-357085">
        <id>Q9UNE7</id>
        <label>STUB1</label>
    </interactant>
    <organismsDiffer>false</organismsDiffer>
    <experiments>9</experiments>
</comment>
<comment type="interaction">
    <interactant intactId="EBI-357393">
        <id>Q9Y2U5</id>
    </interactant>
    <interactant intactId="EBI-356498">
        <id>P62258</id>
        <label>YWHAE</label>
    </interactant>
    <organismsDiffer>false</organismsDiffer>
    <experiments>5</experiments>
</comment>
<comment type="subcellular location">
    <subcellularLocation>
        <location evidence="7">Cytoplasm</location>
    </subcellularLocation>
    <subcellularLocation>
        <location evidence="7">Nucleus</location>
    </subcellularLocation>
    <text>Upon EGF stimulation, translocates into the nucleus.</text>
</comment>
<comment type="PTM">
    <text evidence="1">Autophosphorylated.</text>
</comment>
<comment type="PTM">
    <text evidence="11">Ubiquitination by XIAP/BIRC4 does not lead to proteasomal degradation.</text>
</comment>
<comment type="similarity">
    <text evidence="12">Belongs to the protein kinase superfamily. STE Ser/Thr protein kinase family. MAP kinase kinase kinase subfamily.</text>
</comment>
<comment type="sequence caution" evidence="12">
    <conflict type="erroneous initiation">
        <sequence resource="EMBL-CDS" id="BAC11348"/>
    </conflict>
</comment>
<accession>Q9Y2U5</accession>
<accession>B9EG87</accession>
<accession>Q53QL9</accession>
<accession>Q53S75</accession>
<accession>Q59GZ6</accession>
<accession>Q8NC32</accession>
<accession>Q9NYK3</accession>
<protein>
    <recommendedName>
        <fullName>Mitogen-activated protein kinase kinase kinase 2</fullName>
        <ecNumber>2.7.11.25</ecNumber>
    </recommendedName>
    <alternativeName>
        <fullName>MAPK/ERK kinase kinase 2</fullName>
        <shortName>MEK kinase 2</shortName>
        <shortName>MEKK 2</shortName>
    </alternativeName>
</protein>
<sequence>MDDQQALNSIMQDLAVLHKASRPALSLQETRKAKSSSPKKQNDVRVKFEHRGEKRILQFPRPVKLEDLRSKAKIAFGQSMDLHYTNNELVIPLTTQDDLDKAVELLDRSIHMKSLKILLVINGSTQATNLEPLPSLEDLDNTVFGAERKKRLSIIGPTSRDRSSPPPGYIPDELHQVARNGSFTSINSEGEFIPESMDQMLDPLSLSSPENSGSGSCPSLDSPLDGESYPKSRMPRAQSYPDNHQEFSDYDNPIFEKFGKGGTYPRRYHVSYHHQEYNDGRKTFPRARRTQGTSLRSPVSFSPTDHSLSTSSGSSIFTPEYDDSRIRRRGSDIDNPTLTVMDISPPSRSPRAPTNWRLGKLLGQGAFGRVYLCYDVDTGRELAVKQVQFDPDSPETSKEVNALECEIQLLKNLLHERIVQYYGCLRDPQEKTLSIFMEYMPGGSIKDQLKAYGALTENVTRKYTRQILEGVHYLHSNMIVHRDIKGANILRDSTGNVKLGDFGASKRLQTICLSGTGMKSVTGTPYWMSPEVISGEGYGRKADIWSVACTVVEMLTEKPPWAEFEAMAAIFKIATQPTNPKLPPHVSDYTRDFLKRIFVEAKLRPSADELLRHMFVHYH</sequence>
<proteinExistence type="evidence at protein level"/>
<name>M3K2_HUMAN</name>
<keyword id="KW-0002">3D-structure</keyword>
<keyword id="KW-0067">ATP-binding</keyword>
<keyword id="KW-0963">Cytoplasm</keyword>
<keyword id="KW-0418">Kinase</keyword>
<keyword id="KW-0460">Magnesium</keyword>
<keyword id="KW-0479">Metal-binding</keyword>
<keyword id="KW-0547">Nucleotide-binding</keyword>
<keyword id="KW-0539">Nucleus</keyword>
<keyword id="KW-0597">Phosphoprotein</keyword>
<keyword id="KW-1267">Proteomics identification</keyword>
<keyword id="KW-1185">Reference proteome</keyword>
<keyword id="KW-0723">Serine/threonine-protein kinase</keyword>
<keyword id="KW-0808">Transferase</keyword>
<keyword id="KW-0832">Ubl conjugation</keyword>
<dbReference type="EC" id="2.7.11.25"/>
<dbReference type="EMBL" id="AF111105">
    <property type="protein sequence ID" value="AAD28547.1"/>
    <property type="molecule type" value="mRNA"/>
</dbReference>
<dbReference type="EMBL" id="AF239798">
    <property type="protein sequence ID" value="AAF63496.1"/>
    <property type="molecule type" value="mRNA"/>
</dbReference>
<dbReference type="EMBL" id="AB208963">
    <property type="protein sequence ID" value="BAD92200.1"/>
    <property type="molecule type" value="mRNA"/>
</dbReference>
<dbReference type="EMBL" id="AC068282">
    <property type="protein sequence ID" value="AAY15043.1"/>
    <property type="molecule type" value="Genomic_DNA"/>
</dbReference>
<dbReference type="EMBL" id="AC110926">
    <property type="protein sequence ID" value="AAY15070.1"/>
    <property type="molecule type" value="Genomic_DNA"/>
</dbReference>
<dbReference type="EMBL" id="CH471103">
    <property type="protein sequence ID" value="EAW95315.1"/>
    <property type="molecule type" value="Genomic_DNA"/>
</dbReference>
<dbReference type="EMBL" id="BC136293">
    <property type="protein sequence ID" value="AAI36294.1"/>
    <property type="molecule type" value="mRNA"/>
</dbReference>
<dbReference type="EMBL" id="AK075004">
    <property type="protein sequence ID" value="BAC11348.1"/>
    <property type="status" value="ALT_INIT"/>
    <property type="molecule type" value="mRNA"/>
</dbReference>
<dbReference type="CCDS" id="CCDS46404.1"/>
<dbReference type="RefSeq" id="NP_001358839.1">
    <property type="nucleotide sequence ID" value="NM_001371910.2"/>
</dbReference>
<dbReference type="RefSeq" id="NP_001358840.1">
    <property type="nucleotide sequence ID" value="NM_001371911.1"/>
</dbReference>
<dbReference type="RefSeq" id="NP_006600.3">
    <property type="nucleotide sequence ID" value="NM_006609.4"/>
</dbReference>
<dbReference type="RefSeq" id="XP_047298945.1">
    <property type="nucleotide sequence ID" value="XM_047442989.1"/>
</dbReference>
<dbReference type="RefSeq" id="XP_047298946.1">
    <property type="nucleotide sequence ID" value="XM_047442990.1"/>
</dbReference>
<dbReference type="RefSeq" id="XP_047298947.1">
    <property type="nucleotide sequence ID" value="XM_047442991.1"/>
</dbReference>
<dbReference type="RefSeq" id="XP_054196193.1">
    <property type="nucleotide sequence ID" value="XM_054340218.1"/>
</dbReference>
<dbReference type="RefSeq" id="XP_054196194.1">
    <property type="nucleotide sequence ID" value="XM_054340219.1"/>
</dbReference>
<dbReference type="PDB" id="2CU1">
    <property type="method" value="NMR"/>
    <property type="chains" value="A=43-132"/>
</dbReference>
<dbReference type="PDB" id="2NPT">
    <property type="method" value="X-ray"/>
    <property type="resolution" value="1.75 A"/>
    <property type="chains" value="B/D=26-123"/>
</dbReference>
<dbReference type="PDB" id="5EX0">
    <property type="method" value="X-ray"/>
    <property type="resolution" value="2.70 A"/>
    <property type="chains" value="D=256-265"/>
</dbReference>
<dbReference type="PDB" id="5HQ8">
    <property type="method" value="X-ray"/>
    <property type="resolution" value="1.72 A"/>
    <property type="chains" value="I/J=250-264"/>
</dbReference>
<dbReference type="PDB" id="6LDV">
    <property type="method" value="X-ray"/>
    <property type="resolution" value="1.90 A"/>
    <property type="chains" value="P=252-265"/>
</dbReference>
<dbReference type="PDB" id="6LDW">
    <property type="method" value="X-ray"/>
    <property type="resolution" value="1.60 A"/>
    <property type="chains" value="C/D=252-265"/>
</dbReference>
<dbReference type="PDB" id="6LDX">
    <property type="method" value="X-ray"/>
    <property type="resolution" value="1.80 A"/>
    <property type="chains" value="B=252-265"/>
</dbReference>
<dbReference type="PDB" id="6LDY">
    <property type="method" value="X-ray"/>
    <property type="resolution" value="1.77 A"/>
    <property type="chains" value="C/M=252-265"/>
</dbReference>
<dbReference type="PDBsum" id="2CU1"/>
<dbReference type="PDBsum" id="2NPT"/>
<dbReference type="PDBsum" id="5EX0"/>
<dbReference type="PDBsum" id="5HQ8"/>
<dbReference type="PDBsum" id="6LDV"/>
<dbReference type="PDBsum" id="6LDW"/>
<dbReference type="PDBsum" id="6LDX"/>
<dbReference type="PDBsum" id="6LDY"/>
<dbReference type="SMR" id="Q9Y2U5"/>
<dbReference type="BioGRID" id="115969">
    <property type="interactions" value="75"/>
</dbReference>
<dbReference type="CORUM" id="Q9Y2U5"/>
<dbReference type="DIP" id="DIP-39756N"/>
<dbReference type="FunCoup" id="Q9Y2U5">
    <property type="interactions" value="3098"/>
</dbReference>
<dbReference type="IntAct" id="Q9Y2U5">
    <property type="interactions" value="37"/>
</dbReference>
<dbReference type="MINT" id="Q9Y2U5"/>
<dbReference type="STRING" id="9606.ENSP00000387246"/>
<dbReference type="BindingDB" id="Q9Y2U5"/>
<dbReference type="ChEMBL" id="CHEMBL5914"/>
<dbReference type="DrugBank" id="DB06616">
    <property type="generic name" value="Bosutinib"/>
</dbReference>
<dbReference type="DrugBank" id="DB12429">
    <property type="generic name" value="CI-1040"/>
</dbReference>
<dbReference type="DrugBank" id="DB12010">
    <property type="generic name" value="Fostamatinib"/>
</dbReference>
<dbReference type="DrugBank" id="DB17060">
    <property type="generic name" value="U-0126"/>
</dbReference>
<dbReference type="DrugCentral" id="Q9Y2U5"/>
<dbReference type="GuidetoPHARMACOLOGY" id="2077"/>
<dbReference type="iPTMnet" id="Q9Y2U5"/>
<dbReference type="MetOSite" id="Q9Y2U5"/>
<dbReference type="PhosphoSitePlus" id="Q9Y2U5"/>
<dbReference type="BioMuta" id="MAP3K2"/>
<dbReference type="DMDM" id="97536681"/>
<dbReference type="CPTAC" id="CPTAC-2983"/>
<dbReference type="CPTAC" id="CPTAC-843"/>
<dbReference type="CPTAC" id="CPTAC-844"/>
<dbReference type="jPOST" id="Q9Y2U5"/>
<dbReference type="MassIVE" id="Q9Y2U5"/>
<dbReference type="PaxDb" id="9606-ENSP00000387246"/>
<dbReference type="PeptideAtlas" id="Q9Y2U5"/>
<dbReference type="ProteomicsDB" id="85903"/>
<dbReference type="Pumba" id="Q9Y2U5"/>
<dbReference type="ABCD" id="Q9Y2U5">
    <property type="antibodies" value="4 sequenced antibodies"/>
</dbReference>
<dbReference type="Antibodypedia" id="33427">
    <property type="antibodies" value="276 antibodies from 38 providers"/>
</dbReference>
<dbReference type="DNASU" id="10746"/>
<dbReference type="Ensembl" id="ENST00000344908.9">
    <property type="protein sequence ID" value="ENSP00000343463.5"/>
    <property type="gene ID" value="ENSG00000169967.17"/>
</dbReference>
<dbReference type="Ensembl" id="ENST00000409947.5">
    <property type="protein sequence ID" value="ENSP00000387246.1"/>
    <property type="gene ID" value="ENSG00000169967.17"/>
</dbReference>
<dbReference type="Ensembl" id="ENST00000682094.1">
    <property type="protein sequence ID" value="ENSP00000507315.1"/>
    <property type="gene ID" value="ENSG00000169967.17"/>
</dbReference>
<dbReference type="GeneID" id="10746"/>
<dbReference type="KEGG" id="hsa:10746"/>
<dbReference type="MANE-Select" id="ENST00000682094.1">
    <property type="protein sequence ID" value="ENSP00000507315.1"/>
    <property type="RefSeq nucleotide sequence ID" value="NM_001371910.2"/>
    <property type="RefSeq protein sequence ID" value="NP_001358839.1"/>
</dbReference>
<dbReference type="UCSC" id="uc002toj.3">
    <property type="organism name" value="human"/>
</dbReference>
<dbReference type="AGR" id="HGNC:6854"/>
<dbReference type="CTD" id="10746"/>
<dbReference type="DisGeNET" id="10746"/>
<dbReference type="GeneCards" id="MAP3K2"/>
<dbReference type="HGNC" id="HGNC:6854">
    <property type="gene designation" value="MAP3K2"/>
</dbReference>
<dbReference type="HPA" id="ENSG00000169967">
    <property type="expression patterns" value="Low tissue specificity"/>
</dbReference>
<dbReference type="MIM" id="609487">
    <property type="type" value="gene"/>
</dbReference>
<dbReference type="neXtProt" id="NX_Q9Y2U5"/>
<dbReference type="OpenTargets" id="ENSG00000169967"/>
<dbReference type="PharmGKB" id="PA30598"/>
<dbReference type="VEuPathDB" id="HostDB:ENSG00000169967"/>
<dbReference type="eggNOG" id="KOG0198">
    <property type="taxonomic scope" value="Eukaryota"/>
</dbReference>
<dbReference type="GeneTree" id="ENSGT00940000156884"/>
<dbReference type="HOGENOM" id="CLU_029447_0_0_1"/>
<dbReference type="InParanoid" id="Q9Y2U5"/>
<dbReference type="OMA" id="GPTNRDR"/>
<dbReference type="OrthoDB" id="8693905at2759"/>
<dbReference type="PAN-GO" id="Q9Y2U5">
    <property type="GO annotations" value="2 GO annotations based on evolutionary models"/>
</dbReference>
<dbReference type="PhylomeDB" id="Q9Y2U5"/>
<dbReference type="TreeFam" id="TF105113"/>
<dbReference type="BRENDA" id="2.7.12.2">
    <property type="organism ID" value="2681"/>
</dbReference>
<dbReference type="PathwayCommons" id="Q9Y2U5"/>
<dbReference type="SignaLink" id="Q9Y2U5"/>
<dbReference type="SIGNOR" id="Q9Y2U5"/>
<dbReference type="BioGRID-ORCS" id="10746">
    <property type="hits" value="31 hits in 1189 CRISPR screens"/>
</dbReference>
<dbReference type="ChiTaRS" id="MAP3K2">
    <property type="organism name" value="human"/>
</dbReference>
<dbReference type="EvolutionaryTrace" id="Q9Y2U5"/>
<dbReference type="GeneWiki" id="MAP3K2"/>
<dbReference type="GenomeRNAi" id="10746"/>
<dbReference type="Pharos" id="Q9Y2U5">
    <property type="development level" value="Tchem"/>
</dbReference>
<dbReference type="PRO" id="PR:Q9Y2U5"/>
<dbReference type="Proteomes" id="UP000005640">
    <property type="component" value="Chromosome 2"/>
</dbReference>
<dbReference type="RNAct" id="Q9Y2U5">
    <property type="molecule type" value="protein"/>
</dbReference>
<dbReference type="Bgee" id="ENSG00000169967">
    <property type="expression patterns" value="Expressed in jejunal mucosa and 195 other cell types or tissues"/>
</dbReference>
<dbReference type="ExpressionAtlas" id="Q9Y2U5">
    <property type="expression patterns" value="baseline and differential"/>
</dbReference>
<dbReference type="GO" id="GO:0005737">
    <property type="term" value="C:cytoplasm"/>
    <property type="evidence" value="ECO:0000318"/>
    <property type="project" value="GO_Central"/>
</dbReference>
<dbReference type="GO" id="GO:0005829">
    <property type="term" value="C:cytosol"/>
    <property type="evidence" value="ECO:0000314"/>
    <property type="project" value="HPA"/>
</dbReference>
<dbReference type="GO" id="GO:0005654">
    <property type="term" value="C:nucleoplasm"/>
    <property type="evidence" value="ECO:0000314"/>
    <property type="project" value="HPA"/>
</dbReference>
<dbReference type="GO" id="GO:0005524">
    <property type="term" value="F:ATP binding"/>
    <property type="evidence" value="ECO:0007669"/>
    <property type="project" value="UniProtKB-KW"/>
</dbReference>
<dbReference type="GO" id="GO:0004709">
    <property type="term" value="F:MAP kinase kinase kinase activity"/>
    <property type="evidence" value="ECO:0007669"/>
    <property type="project" value="UniProtKB-EC"/>
</dbReference>
<dbReference type="GO" id="GO:0046872">
    <property type="term" value="F:metal ion binding"/>
    <property type="evidence" value="ECO:0007669"/>
    <property type="project" value="UniProtKB-KW"/>
</dbReference>
<dbReference type="GO" id="GO:0004672">
    <property type="term" value="F:protein kinase activity"/>
    <property type="evidence" value="ECO:0000314"/>
    <property type="project" value="MGI"/>
</dbReference>
<dbReference type="GO" id="GO:0019901">
    <property type="term" value="F:protein kinase binding"/>
    <property type="evidence" value="ECO:0000353"/>
    <property type="project" value="UniProtKB"/>
</dbReference>
<dbReference type="GO" id="GO:0106310">
    <property type="term" value="F:protein serine kinase activity"/>
    <property type="evidence" value="ECO:0007669"/>
    <property type="project" value="RHEA"/>
</dbReference>
<dbReference type="GO" id="GO:0004674">
    <property type="term" value="F:protein serine/threonine kinase activity"/>
    <property type="evidence" value="ECO:0000318"/>
    <property type="project" value="GO_Central"/>
</dbReference>
<dbReference type="GO" id="GO:0071260">
    <property type="term" value="P:cellular response to mechanical stimulus"/>
    <property type="evidence" value="ECO:0000270"/>
    <property type="project" value="UniProtKB"/>
</dbReference>
<dbReference type="GO" id="GO:0035556">
    <property type="term" value="P:intracellular signal transduction"/>
    <property type="evidence" value="ECO:0000314"/>
    <property type="project" value="UniProtKB"/>
</dbReference>
<dbReference type="CDD" id="cd06405">
    <property type="entry name" value="PB1_Mekk2_3"/>
    <property type="match status" value="1"/>
</dbReference>
<dbReference type="CDD" id="cd06652">
    <property type="entry name" value="STKc_MEKK2"/>
    <property type="match status" value="1"/>
</dbReference>
<dbReference type="FunFam" id="1.10.510.10:FF:000071">
    <property type="entry name" value="Mitogen-activated protein kinase kinase kinase 3 isoform 2"/>
    <property type="match status" value="1"/>
</dbReference>
<dbReference type="FunFam" id="3.10.20.90:FF:000026">
    <property type="entry name" value="Mitogen-activated protein kinase kinase kinase 3 isoform 2"/>
    <property type="match status" value="1"/>
</dbReference>
<dbReference type="Gene3D" id="3.10.20.90">
    <property type="entry name" value="Phosphatidylinositol 3-kinase Catalytic Subunit, Chain A, domain 1"/>
    <property type="match status" value="1"/>
</dbReference>
<dbReference type="Gene3D" id="1.10.510.10">
    <property type="entry name" value="Transferase(Phosphotransferase) domain 1"/>
    <property type="match status" value="1"/>
</dbReference>
<dbReference type="InterPro" id="IPR011009">
    <property type="entry name" value="Kinase-like_dom_sf"/>
</dbReference>
<dbReference type="InterPro" id="IPR053793">
    <property type="entry name" value="PB1-like"/>
</dbReference>
<dbReference type="InterPro" id="IPR000270">
    <property type="entry name" value="PB1_dom"/>
</dbReference>
<dbReference type="InterPro" id="IPR034879">
    <property type="entry name" value="PB1_MEKK2/3"/>
</dbReference>
<dbReference type="InterPro" id="IPR000719">
    <property type="entry name" value="Prot_kinase_dom"/>
</dbReference>
<dbReference type="InterPro" id="IPR017441">
    <property type="entry name" value="Protein_kinase_ATP_BS"/>
</dbReference>
<dbReference type="PANTHER" id="PTHR11584:SF369">
    <property type="entry name" value="MITOGEN-ACTIVATED PROTEIN KINASE KINASE KINASE 19-RELATED"/>
    <property type="match status" value="1"/>
</dbReference>
<dbReference type="PANTHER" id="PTHR11584">
    <property type="entry name" value="SERINE/THREONINE PROTEIN KINASE"/>
    <property type="match status" value="1"/>
</dbReference>
<dbReference type="Pfam" id="PF00564">
    <property type="entry name" value="PB1"/>
    <property type="match status" value="1"/>
</dbReference>
<dbReference type="Pfam" id="PF00069">
    <property type="entry name" value="Pkinase"/>
    <property type="match status" value="1"/>
</dbReference>
<dbReference type="SMART" id="SM00666">
    <property type="entry name" value="PB1"/>
    <property type="match status" value="1"/>
</dbReference>
<dbReference type="SMART" id="SM00220">
    <property type="entry name" value="S_TKc"/>
    <property type="match status" value="1"/>
</dbReference>
<dbReference type="SUPFAM" id="SSF54277">
    <property type="entry name" value="CAD &amp; PB1 domains"/>
    <property type="match status" value="1"/>
</dbReference>
<dbReference type="SUPFAM" id="SSF56112">
    <property type="entry name" value="Protein kinase-like (PK-like)"/>
    <property type="match status" value="1"/>
</dbReference>
<dbReference type="PROSITE" id="PS51745">
    <property type="entry name" value="PB1"/>
    <property type="match status" value="1"/>
</dbReference>
<dbReference type="PROSITE" id="PS00107">
    <property type="entry name" value="PROTEIN_KINASE_ATP"/>
    <property type="match status" value="1"/>
</dbReference>
<dbReference type="PROSITE" id="PS50011">
    <property type="entry name" value="PROTEIN_KINASE_DOM"/>
    <property type="match status" value="1"/>
</dbReference>
<feature type="chain" id="PRO_0000086243" description="Mitogen-activated protein kinase kinase kinase 2">
    <location>
        <begin position="1"/>
        <end position="619"/>
    </location>
</feature>
<feature type="domain" description="PB1" evidence="4">
    <location>
        <begin position="43"/>
        <end position="122"/>
    </location>
</feature>
<feature type="domain" description="Protein kinase" evidence="3">
    <location>
        <begin position="357"/>
        <end position="617"/>
    </location>
</feature>
<feature type="region of interest" description="Disordered" evidence="5">
    <location>
        <begin position="25"/>
        <end position="45"/>
    </location>
</feature>
<feature type="region of interest" description="Disordered" evidence="5">
    <location>
        <begin position="154"/>
        <end position="173"/>
    </location>
</feature>
<feature type="region of interest" description="Disordered" evidence="5">
    <location>
        <begin position="201"/>
        <end position="248"/>
    </location>
</feature>
<feature type="region of interest" description="Disordered" evidence="5">
    <location>
        <begin position="289"/>
        <end position="355"/>
    </location>
</feature>
<feature type="compositionally biased region" description="Low complexity" evidence="5">
    <location>
        <begin position="203"/>
        <end position="219"/>
    </location>
</feature>
<feature type="compositionally biased region" description="Polar residues" evidence="5">
    <location>
        <begin position="290"/>
        <end position="299"/>
    </location>
</feature>
<feature type="compositionally biased region" description="Low complexity" evidence="5">
    <location>
        <begin position="300"/>
        <end position="315"/>
    </location>
</feature>
<feature type="compositionally biased region" description="Basic and acidic residues" evidence="5">
    <location>
        <begin position="322"/>
        <end position="332"/>
    </location>
</feature>
<feature type="active site" description="Proton acceptor" evidence="3">
    <location>
        <position position="483"/>
    </location>
</feature>
<feature type="binding site" evidence="3">
    <location>
        <begin position="362"/>
        <end position="371"/>
    </location>
    <ligand>
        <name>ATP</name>
        <dbReference type="ChEBI" id="CHEBI:30616"/>
    </ligand>
</feature>
<feature type="binding site" evidence="3">
    <location>
        <position position="385"/>
    </location>
    <ligand>
        <name>ATP</name>
        <dbReference type="ChEBI" id="CHEBI:30616"/>
    </ligand>
</feature>
<feature type="modified residue" description="Phosphoserine" evidence="16">
    <location>
        <position position="26"/>
    </location>
</feature>
<feature type="modified residue" description="Phosphoserine" evidence="14 15 16 18 19">
    <location>
        <position position="153"/>
    </location>
</feature>
<feature type="modified residue" description="Phosphoserine" evidence="14">
    <location>
        <position position="159"/>
    </location>
</feature>
<feature type="modified residue" description="Phosphoserine" evidence="14">
    <location>
        <position position="164"/>
    </location>
</feature>
<feature type="modified residue" description="Phosphoserine" evidence="17 19">
    <location>
        <position position="239"/>
    </location>
</feature>
<feature type="modified residue" description="Phosphoserine" evidence="13">
    <location>
        <position position="297"/>
    </location>
</feature>
<feature type="modified residue" description="Phosphoserine" evidence="19">
    <location>
        <position position="311"/>
    </location>
</feature>
<feature type="modified residue" description="Phosphoserine" evidence="15 16 17 19 20">
    <location>
        <position position="331"/>
    </location>
</feature>
<feature type="modified residue" description="Phosphoserine" evidence="15 16 17">
    <location>
        <position position="344"/>
    </location>
</feature>
<feature type="modified residue" description="Phosphoserine" evidence="2">
    <location>
        <position position="349"/>
    </location>
</feature>
<feature type="sequence variant" id="VAR_040682" description="In dbSNP:rs55767983." evidence="9">
    <original>I</original>
    <variation>V</variation>
    <location>
        <position position="110"/>
    </location>
</feature>
<feature type="sequence variant" id="VAR_040683" description="In a lung large cell carcinoma sample; somatic mutation." evidence="9">
    <original>M</original>
    <variation>I</variation>
    <location>
        <position position="112"/>
    </location>
</feature>
<feature type="sequence variant" id="VAR_040684" description="In dbSNP:rs56307783." evidence="9">
    <original>D</original>
    <variation>G</variation>
    <location>
        <position position="140"/>
    </location>
</feature>
<feature type="sequence conflict" description="In Ref. 3; BAD92200." evidence="12" ref="3">
    <original>M</original>
    <variation>GTR</variation>
    <location>
        <position position="1"/>
    </location>
</feature>
<feature type="sequence conflict" description="In Ref. 1; AAD28547 and 2; AAF63496." evidence="12" ref="1 2">
    <original>V</original>
    <variation>L</variation>
    <location>
        <position position="103"/>
    </location>
</feature>
<feature type="sequence conflict" description="In Ref. 1; AAD28547 and 2; AAF63496." evidence="12" ref="1 2">
    <original>D</original>
    <variation>E</variation>
    <location>
        <position position="198"/>
    </location>
</feature>
<feature type="sequence conflict" description="In Ref. 1; AAD28547." evidence="12" ref="1">
    <original>D</original>
    <variation>G</variation>
    <location>
        <position position="225"/>
    </location>
</feature>
<feature type="sequence conflict" description="In Ref. 1; AAD28547." evidence="12" ref="1">
    <original>QEY</original>
    <variation>KD</variation>
    <location>
        <begin position="275"/>
        <end position="277"/>
    </location>
</feature>
<feature type="sequence conflict" description="In Ref. 1; AAD28547 and 2; AAF63496." evidence="12" ref="1 2">
    <original>TSLR</original>
    <variation>NQLT</variation>
    <location>
        <begin position="293"/>
        <end position="296"/>
    </location>
</feature>
<feature type="sequence conflict" description="In Ref. 1; AAD28547." evidence="12" ref="1">
    <original>L</original>
    <variation>F</variation>
    <location>
        <position position="413"/>
    </location>
</feature>
<feature type="sequence conflict" description="In Ref. 1; AAD28547." evidence="12" ref="1">
    <original>V</original>
    <variation>G</variation>
    <location>
        <position position="459"/>
    </location>
</feature>
<feature type="sequence conflict" description="In Ref. 1; AAD28547." evidence="12" ref="1">
    <original>V</original>
    <variation>L</variation>
    <location>
        <position position="480"/>
    </location>
</feature>
<feature type="sequence conflict" description="In Ref. 1; AAD28547 and 2; AAF63496." evidence="12" ref="1 2">
    <original>E</original>
    <variation>Q</variation>
    <location>
        <position position="536"/>
    </location>
</feature>
<feature type="sequence conflict" description="In Ref. 7; BAC11348." evidence="12" ref="7">
    <original>N</original>
    <variation>S</variation>
    <location>
        <position position="579"/>
    </location>
</feature>
<feature type="strand" evidence="21">
    <location>
        <begin position="44"/>
        <end position="50"/>
    </location>
</feature>
<feature type="strand" evidence="21">
    <location>
        <begin position="53"/>
        <end position="59"/>
    </location>
</feature>
<feature type="helix" evidence="21">
    <location>
        <begin position="65"/>
        <end position="76"/>
    </location>
</feature>
<feature type="strand" evidence="21">
    <location>
        <begin position="80"/>
        <end position="86"/>
    </location>
</feature>
<feature type="strand" evidence="21">
    <location>
        <begin position="89"/>
        <end position="92"/>
    </location>
</feature>
<feature type="helix" evidence="21">
    <location>
        <begin position="96"/>
        <end position="108"/>
    </location>
</feature>
<feature type="strand" evidence="21">
    <location>
        <begin position="114"/>
        <end position="121"/>
    </location>
</feature>
<feature type="strand" evidence="22">
    <location>
        <begin position="260"/>
        <end position="262"/>
    </location>
</feature>
<reference key="1">
    <citation type="submission" date="1998-12" db="EMBL/GenBank/DDBJ databases">
        <title>MEKK2 is involved in transducing T-cell co-stimulatory signals to the JNK cascade.</title>
        <authorList>
            <person name="Su B."/>
            <person name="Yang J.H."/>
            <person name="Xia Y."/>
            <person name="Karin M."/>
        </authorList>
    </citation>
    <scope>NUCLEOTIDE SEQUENCE [MRNA]</scope>
</reference>
<reference key="2">
    <citation type="submission" date="2000-02" db="EMBL/GenBank/DDBJ databases">
        <title>Cloning of human MEKK2b cDNA.</title>
        <authorList>
            <person name="Wang C."/>
            <person name="Lo H."/>
        </authorList>
    </citation>
    <scope>NUCLEOTIDE SEQUENCE [MRNA]</scope>
    <source>
        <tissue>T-cell</tissue>
    </source>
</reference>
<reference key="3">
    <citation type="submission" date="2005-03" db="EMBL/GenBank/DDBJ databases">
        <authorList>
            <person name="Totoki Y."/>
            <person name="Toyoda A."/>
            <person name="Takeda T."/>
            <person name="Sakaki Y."/>
            <person name="Tanaka A."/>
            <person name="Yokoyama S."/>
            <person name="Ohara O."/>
            <person name="Nagase T."/>
            <person name="Kikuno R.F."/>
        </authorList>
    </citation>
    <scope>NUCLEOTIDE SEQUENCE [LARGE SCALE MRNA]</scope>
    <source>
        <tissue>Brain</tissue>
    </source>
</reference>
<reference key="4">
    <citation type="journal article" date="2005" name="Nature">
        <title>Generation and annotation of the DNA sequences of human chromosomes 2 and 4.</title>
        <authorList>
            <person name="Hillier L.W."/>
            <person name="Graves T.A."/>
            <person name="Fulton R.S."/>
            <person name="Fulton L.A."/>
            <person name="Pepin K.H."/>
            <person name="Minx P."/>
            <person name="Wagner-McPherson C."/>
            <person name="Layman D."/>
            <person name="Wylie K."/>
            <person name="Sekhon M."/>
            <person name="Becker M.C."/>
            <person name="Fewell G.A."/>
            <person name="Delehaunty K.D."/>
            <person name="Miner T.L."/>
            <person name="Nash W.E."/>
            <person name="Kremitzki C."/>
            <person name="Oddy L."/>
            <person name="Du H."/>
            <person name="Sun H."/>
            <person name="Bradshaw-Cordum H."/>
            <person name="Ali J."/>
            <person name="Carter J."/>
            <person name="Cordes M."/>
            <person name="Harris A."/>
            <person name="Isak A."/>
            <person name="van Brunt A."/>
            <person name="Nguyen C."/>
            <person name="Du F."/>
            <person name="Courtney L."/>
            <person name="Kalicki J."/>
            <person name="Ozersky P."/>
            <person name="Abbott S."/>
            <person name="Armstrong J."/>
            <person name="Belter E.A."/>
            <person name="Caruso L."/>
            <person name="Cedroni M."/>
            <person name="Cotton M."/>
            <person name="Davidson T."/>
            <person name="Desai A."/>
            <person name="Elliott G."/>
            <person name="Erb T."/>
            <person name="Fronick C."/>
            <person name="Gaige T."/>
            <person name="Haakenson W."/>
            <person name="Haglund K."/>
            <person name="Holmes A."/>
            <person name="Harkins R."/>
            <person name="Kim K."/>
            <person name="Kruchowski S.S."/>
            <person name="Strong C.M."/>
            <person name="Grewal N."/>
            <person name="Goyea E."/>
            <person name="Hou S."/>
            <person name="Levy A."/>
            <person name="Martinka S."/>
            <person name="Mead K."/>
            <person name="McLellan M.D."/>
            <person name="Meyer R."/>
            <person name="Randall-Maher J."/>
            <person name="Tomlinson C."/>
            <person name="Dauphin-Kohlberg S."/>
            <person name="Kozlowicz-Reilly A."/>
            <person name="Shah N."/>
            <person name="Swearengen-Shahid S."/>
            <person name="Snider J."/>
            <person name="Strong J.T."/>
            <person name="Thompson J."/>
            <person name="Yoakum M."/>
            <person name="Leonard S."/>
            <person name="Pearman C."/>
            <person name="Trani L."/>
            <person name="Radionenko M."/>
            <person name="Waligorski J.E."/>
            <person name="Wang C."/>
            <person name="Rock S.M."/>
            <person name="Tin-Wollam A.-M."/>
            <person name="Maupin R."/>
            <person name="Latreille P."/>
            <person name="Wendl M.C."/>
            <person name="Yang S.-P."/>
            <person name="Pohl C."/>
            <person name="Wallis J.W."/>
            <person name="Spieth J."/>
            <person name="Bieri T.A."/>
            <person name="Berkowicz N."/>
            <person name="Nelson J.O."/>
            <person name="Osborne J."/>
            <person name="Ding L."/>
            <person name="Meyer R."/>
            <person name="Sabo A."/>
            <person name="Shotland Y."/>
            <person name="Sinha P."/>
            <person name="Wohldmann P.E."/>
            <person name="Cook L.L."/>
            <person name="Hickenbotham M.T."/>
            <person name="Eldred J."/>
            <person name="Williams D."/>
            <person name="Jones T.A."/>
            <person name="She X."/>
            <person name="Ciccarelli F.D."/>
            <person name="Izaurralde E."/>
            <person name="Taylor J."/>
            <person name="Schmutz J."/>
            <person name="Myers R.M."/>
            <person name="Cox D.R."/>
            <person name="Huang X."/>
            <person name="McPherson J.D."/>
            <person name="Mardis E.R."/>
            <person name="Clifton S.W."/>
            <person name="Warren W.C."/>
            <person name="Chinwalla A.T."/>
            <person name="Eddy S.R."/>
            <person name="Marra M.A."/>
            <person name="Ovcharenko I."/>
            <person name="Furey T.S."/>
            <person name="Miller W."/>
            <person name="Eichler E.E."/>
            <person name="Bork P."/>
            <person name="Suyama M."/>
            <person name="Torrents D."/>
            <person name="Waterston R.H."/>
            <person name="Wilson R.K."/>
        </authorList>
    </citation>
    <scope>NUCLEOTIDE SEQUENCE [LARGE SCALE GENOMIC DNA]</scope>
</reference>
<reference key="5">
    <citation type="submission" date="2005-07" db="EMBL/GenBank/DDBJ databases">
        <authorList>
            <person name="Mural R.J."/>
            <person name="Istrail S."/>
            <person name="Sutton G.G."/>
            <person name="Florea L."/>
            <person name="Halpern A.L."/>
            <person name="Mobarry C.M."/>
            <person name="Lippert R."/>
            <person name="Walenz B."/>
            <person name="Shatkay H."/>
            <person name="Dew I."/>
            <person name="Miller J.R."/>
            <person name="Flanigan M.J."/>
            <person name="Edwards N.J."/>
            <person name="Bolanos R."/>
            <person name="Fasulo D."/>
            <person name="Halldorsson B.V."/>
            <person name="Hannenhalli S."/>
            <person name="Turner R."/>
            <person name="Yooseph S."/>
            <person name="Lu F."/>
            <person name="Nusskern D.R."/>
            <person name="Shue B.C."/>
            <person name="Zheng X.H."/>
            <person name="Zhong F."/>
            <person name="Delcher A.L."/>
            <person name="Huson D.H."/>
            <person name="Kravitz S.A."/>
            <person name="Mouchard L."/>
            <person name="Reinert K."/>
            <person name="Remington K.A."/>
            <person name="Clark A.G."/>
            <person name="Waterman M.S."/>
            <person name="Eichler E.E."/>
            <person name="Adams M.D."/>
            <person name="Hunkapiller M.W."/>
            <person name="Myers E.W."/>
            <person name="Venter J.C."/>
        </authorList>
    </citation>
    <scope>NUCLEOTIDE SEQUENCE [LARGE SCALE GENOMIC DNA]</scope>
</reference>
<reference key="6">
    <citation type="journal article" date="2004" name="Genome Res.">
        <title>The status, quality, and expansion of the NIH full-length cDNA project: the Mammalian Gene Collection (MGC).</title>
        <authorList>
            <consortium name="The MGC Project Team"/>
        </authorList>
    </citation>
    <scope>NUCLEOTIDE SEQUENCE [LARGE SCALE MRNA]</scope>
    <source>
        <tissue>Testis</tissue>
    </source>
</reference>
<reference key="7">
    <citation type="journal article" date="2004" name="Nat. Genet.">
        <title>Complete sequencing and characterization of 21,243 full-length human cDNAs.</title>
        <authorList>
            <person name="Ota T."/>
            <person name="Suzuki Y."/>
            <person name="Nishikawa T."/>
            <person name="Otsuki T."/>
            <person name="Sugiyama T."/>
            <person name="Irie R."/>
            <person name="Wakamatsu A."/>
            <person name="Hayashi K."/>
            <person name="Sato H."/>
            <person name="Nagai K."/>
            <person name="Kimura K."/>
            <person name="Makita H."/>
            <person name="Sekine M."/>
            <person name="Obayashi M."/>
            <person name="Nishi T."/>
            <person name="Shibahara T."/>
            <person name="Tanaka T."/>
            <person name="Ishii S."/>
            <person name="Yamamoto J."/>
            <person name="Saito K."/>
            <person name="Kawai Y."/>
            <person name="Isono Y."/>
            <person name="Nakamura Y."/>
            <person name="Nagahari K."/>
            <person name="Murakami K."/>
            <person name="Yasuda T."/>
            <person name="Iwayanagi T."/>
            <person name="Wagatsuma M."/>
            <person name="Shiratori A."/>
            <person name="Sudo H."/>
            <person name="Hosoiri T."/>
            <person name="Kaku Y."/>
            <person name="Kodaira H."/>
            <person name="Kondo H."/>
            <person name="Sugawara M."/>
            <person name="Takahashi M."/>
            <person name="Kanda K."/>
            <person name="Yokoi T."/>
            <person name="Furuya T."/>
            <person name="Kikkawa E."/>
            <person name="Omura Y."/>
            <person name="Abe K."/>
            <person name="Kamihara K."/>
            <person name="Katsuta N."/>
            <person name="Sato K."/>
            <person name="Tanikawa M."/>
            <person name="Yamazaki M."/>
            <person name="Ninomiya K."/>
            <person name="Ishibashi T."/>
            <person name="Yamashita H."/>
            <person name="Murakawa K."/>
            <person name="Fujimori K."/>
            <person name="Tanai H."/>
            <person name="Kimata M."/>
            <person name="Watanabe M."/>
            <person name="Hiraoka S."/>
            <person name="Chiba Y."/>
            <person name="Ishida S."/>
            <person name="Ono Y."/>
            <person name="Takiguchi S."/>
            <person name="Watanabe S."/>
            <person name="Yosida M."/>
            <person name="Hotuta T."/>
            <person name="Kusano J."/>
            <person name="Kanehori K."/>
            <person name="Takahashi-Fujii A."/>
            <person name="Hara H."/>
            <person name="Tanase T.-O."/>
            <person name="Nomura Y."/>
            <person name="Togiya S."/>
            <person name="Komai F."/>
            <person name="Hara R."/>
            <person name="Takeuchi K."/>
            <person name="Arita M."/>
            <person name="Imose N."/>
            <person name="Musashino K."/>
            <person name="Yuuki H."/>
            <person name="Oshima A."/>
            <person name="Sasaki N."/>
            <person name="Aotsuka S."/>
            <person name="Yoshikawa Y."/>
            <person name="Matsunawa H."/>
            <person name="Ichihara T."/>
            <person name="Shiohata N."/>
            <person name="Sano S."/>
            <person name="Moriya S."/>
            <person name="Momiyama H."/>
            <person name="Satoh N."/>
            <person name="Takami S."/>
            <person name="Terashima Y."/>
            <person name="Suzuki O."/>
            <person name="Nakagawa S."/>
            <person name="Senoh A."/>
            <person name="Mizoguchi H."/>
            <person name="Goto Y."/>
            <person name="Shimizu F."/>
            <person name="Wakebe H."/>
            <person name="Hishigaki H."/>
            <person name="Watanabe T."/>
            <person name="Sugiyama A."/>
            <person name="Takemoto M."/>
            <person name="Kawakami B."/>
            <person name="Yamazaki M."/>
            <person name="Watanabe K."/>
            <person name="Kumagai A."/>
            <person name="Itakura S."/>
            <person name="Fukuzumi Y."/>
            <person name="Fujimori Y."/>
            <person name="Komiyama M."/>
            <person name="Tashiro H."/>
            <person name="Tanigami A."/>
            <person name="Fujiwara T."/>
            <person name="Ono T."/>
            <person name="Yamada K."/>
            <person name="Fujii Y."/>
            <person name="Ozaki K."/>
            <person name="Hirao M."/>
            <person name="Ohmori Y."/>
            <person name="Kawabata A."/>
            <person name="Hikiji T."/>
            <person name="Kobatake N."/>
            <person name="Inagaki H."/>
            <person name="Ikema Y."/>
            <person name="Okamoto S."/>
            <person name="Okitani R."/>
            <person name="Kawakami T."/>
            <person name="Noguchi S."/>
            <person name="Itoh T."/>
            <person name="Shigeta K."/>
            <person name="Senba T."/>
            <person name="Matsumura K."/>
            <person name="Nakajima Y."/>
            <person name="Mizuno T."/>
            <person name="Morinaga M."/>
            <person name="Sasaki M."/>
            <person name="Togashi T."/>
            <person name="Oyama M."/>
            <person name="Hata H."/>
            <person name="Watanabe M."/>
            <person name="Komatsu T."/>
            <person name="Mizushima-Sugano J."/>
            <person name="Satoh T."/>
            <person name="Shirai Y."/>
            <person name="Takahashi Y."/>
            <person name="Nakagawa K."/>
            <person name="Okumura K."/>
            <person name="Nagase T."/>
            <person name="Nomura N."/>
            <person name="Kikuchi H."/>
            <person name="Masuho Y."/>
            <person name="Yamashita R."/>
            <person name="Nakai K."/>
            <person name="Yada T."/>
            <person name="Nakamura Y."/>
            <person name="Ohara O."/>
            <person name="Isogai T."/>
            <person name="Sugano S."/>
        </authorList>
    </citation>
    <scope>NUCLEOTIDE SEQUENCE [LARGE SCALE MRNA] OF 180-619</scope>
    <source>
        <tissue>Teratocarcinoma</tissue>
    </source>
</reference>
<reference key="8">
    <citation type="journal article" date="2000" name="Mol. Cell. Biol.">
        <title>Synergistic interaction of MEK kinase 2, c-Jun N-terminal kinase (JNK) kinase 2, and JNK1 results in efficient and specific JNK1 activation.</title>
        <authorList>
            <person name="Cheng J."/>
            <person name="Yang J."/>
            <person name="Xia Y."/>
            <person name="Karin M."/>
            <person name="Su B."/>
        </authorList>
    </citation>
    <scope>FUNCTION</scope>
    <scope>INTERACTION WITH MAP2K7 AND MAPK8</scope>
</reference>
<reference key="9">
    <citation type="journal article" date="2004" name="J. Cell Sci.">
        <title>MEK5 and ERK5 are localized in the nuclei of resting as well as stimulated cells, while MEKK2 translocates from the cytosol to the nucleus upon stimulation.</title>
        <authorList>
            <person name="Raviv Z."/>
            <person name="Kalie E."/>
            <person name="Seger R."/>
        </authorList>
    </citation>
    <scope>SUBCELLULAR LOCATION</scope>
</reference>
<reference key="10">
    <citation type="journal article" date="2005" name="Nature">
        <title>Kinase-regulated quantal assemblies and kiss-and-run recycling of caveolae.</title>
        <authorList>
            <person name="Pelkmans L."/>
            <person name="Zerial M."/>
        </authorList>
    </citation>
    <scope>FUNCTION</scope>
</reference>
<reference key="11">
    <citation type="journal article" date="2006" name="Cell">
        <title>Global, in vivo, and site-specific phosphorylation dynamics in signaling networks.</title>
        <authorList>
            <person name="Olsen J.V."/>
            <person name="Blagoev B."/>
            <person name="Gnad F."/>
            <person name="Macek B."/>
            <person name="Kumar C."/>
            <person name="Mortensen P."/>
            <person name="Mann M."/>
        </authorList>
    </citation>
    <scope>IDENTIFICATION BY MASS SPECTROMETRY [LARGE SCALE ANALYSIS]</scope>
    <source>
        <tissue>Cervix carcinoma</tissue>
    </source>
</reference>
<reference key="12">
    <citation type="journal article" date="2008" name="Cell. Signal.">
        <title>XIAP regulates bi-phasic NF-kappaB induction involving physical interaction and ubiquitination of MEKK2.</title>
        <authorList>
            <person name="Winsauer G."/>
            <person name="Resch U."/>
            <person name="Hofer-Warbinek R."/>
            <person name="Schichl Y.M."/>
            <person name="de Martin R."/>
        </authorList>
    </citation>
    <scope>UBIQUITINATION BY XIAP/BIRC4</scope>
    <scope>INTERACTION WITH XIAP/BIRC4</scope>
</reference>
<reference key="13">
    <citation type="journal article" date="2008" name="J. Proteome Res.">
        <title>Combining protein-based IMAC, peptide-based IMAC, and MudPIT for efficient phosphoproteomic analysis.</title>
        <authorList>
            <person name="Cantin G.T."/>
            <person name="Yi W."/>
            <person name="Lu B."/>
            <person name="Park S.K."/>
            <person name="Xu T."/>
            <person name="Lee J.-D."/>
            <person name="Yates J.R. III"/>
        </authorList>
    </citation>
    <scope>PHOSPHORYLATION [LARGE SCALE ANALYSIS] AT SER-297</scope>
    <scope>IDENTIFICATION BY MASS SPECTROMETRY [LARGE SCALE ANALYSIS]</scope>
    <source>
        <tissue>Cervix carcinoma</tissue>
    </source>
</reference>
<reference key="14">
    <citation type="journal article" date="2008" name="J. Proteome Res.">
        <title>Phosphoproteome of resting human platelets.</title>
        <authorList>
            <person name="Zahedi R.P."/>
            <person name="Lewandrowski U."/>
            <person name="Wiesner J."/>
            <person name="Wortelkamp S."/>
            <person name="Moebius J."/>
            <person name="Schuetz C."/>
            <person name="Walter U."/>
            <person name="Gambaryan S."/>
            <person name="Sickmann A."/>
        </authorList>
    </citation>
    <scope>IDENTIFICATION BY MASS SPECTROMETRY [LARGE SCALE ANALYSIS]</scope>
    <source>
        <tissue>Platelet</tissue>
    </source>
</reference>
<reference key="15">
    <citation type="journal article" date="2008" name="Mol. Cell">
        <title>Kinase-selective enrichment enables quantitative phosphoproteomics of the kinome across the cell cycle.</title>
        <authorList>
            <person name="Daub H."/>
            <person name="Olsen J.V."/>
            <person name="Bairlein M."/>
            <person name="Gnad F."/>
            <person name="Oppermann F.S."/>
            <person name="Korner R."/>
            <person name="Greff Z."/>
            <person name="Keri G."/>
            <person name="Stemmann O."/>
            <person name="Mann M."/>
        </authorList>
    </citation>
    <scope>PHOSPHORYLATION [LARGE SCALE ANALYSIS] AT SER-153; SER-331 AND SER-344</scope>
    <scope>IDENTIFICATION BY MASS SPECTROMETRY [LARGE SCALE ANALYSIS]</scope>
    <source>
        <tissue>Cervix carcinoma</tissue>
    </source>
</reference>
<reference key="16">
    <citation type="journal article" date="2008" name="Oncogene">
        <title>Negative regulation of MEKK1/2 signaling by serine-threonine kinase 38 (STK38).</title>
        <authorList>
            <person name="Enomoto A."/>
            <person name="Kido N."/>
            <person name="Ito M."/>
            <person name="Morita A."/>
            <person name="Matsumoto Y."/>
            <person name="Takamatsu N."/>
            <person name="Hosoi Y."/>
            <person name="Miyagawa K."/>
        </authorList>
    </citation>
    <scope>INTERACTION WITH STK38</scope>
    <scope>SELF-ASSOCIATION</scope>
</reference>
<reference key="17">
    <citation type="journal article" date="2008" name="Proc. Natl. Acad. Sci. U.S.A.">
        <title>A quantitative atlas of mitotic phosphorylation.</title>
        <authorList>
            <person name="Dephoure N."/>
            <person name="Zhou C."/>
            <person name="Villen J."/>
            <person name="Beausoleil S.A."/>
            <person name="Bakalarski C.E."/>
            <person name="Elledge S.J."/>
            <person name="Gygi S.P."/>
        </authorList>
    </citation>
    <scope>PHOSPHORYLATION [LARGE SCALE ANALYSIS] AT SER-153; SER-159 AND SER-164</scope>
    <scope>IDENTIFICATION BY MASS SPECTROMETRY [LARGE SCALE ANALYSIS]</scope>
    <source>
        <tissue>Cervix carcinoma</tissue>
    </source>
</reference>
<reference key="18">
    <citation type="journal article" date="2009" name="Mol. Cell. Proteomics">
        <title>Large-scale proteomics analysis of the human kinome.</title>
        <authorList>
            <person name="Oppermann F.S."/>
            <person name="Gnad F."/>
            <person name="Olsen J.V."/>
            <person name="Hornberger R."/>
            <person name="Greff Z."/>
            <person name="Keri G."/>
            <person name="Mann M."/>
            <person name="Daub H."/>
        </authorList>
    </citation>
    <scope>PHOSPHORYLATION [LARGE SCALE ANALYSIS] AT SER-26; SER-153; SER-331 AND SER-344</scope>
    <scope>IDENTIFICATION BY MASS SPECTROMETRY [LARGE SCALE ANALYSIS]</scope>
</reference>
<reference key="19">
    <citation type="journal article" date="2009" name="Sci. Signal.">
        <title>Quantitative phosphoproteomic analysis of T cell receptor signaling reveals system-wide modulation of protein-protein interactions.</title>
        <authorList>
            <person name="Mayya V."/>
            <person name="Lundgren D.H."/>
            <person name="Hwang S.-I."/>
            <person name="Rezaul K."/>
            <person name="Wu L."/>
            <person name="Eng J.K."/>
            <person name="Rodionov V."/>
            <person name="Han D.K."/>
        </authorList>
    </citation>
    <scope>PHOSPHORYLATION [LARGE SCALE ANALYSIS] AT SER-239; SER-331 AND SER-344</scope>
    <scope>IDENTIFICATION BY MASS SPECTROMETRY [LARGE SCALE ANALYSIS]</scope>
    <source>
        <tissue>Leukemic T-cell</tissue>
    </source>
</reference>
<reference key="20">
    <citation type="journal article" date="2010" name="Sci. Signal.">
        <title>Quantitative phosphoproteomics reveals widespread full phosphorylation site occupancy during mitosis.</title>
        <authorList>
            <person name="Olsen J.V."/>
            <person name="Vermeulen M."/>
            <person name="Santamaria A."/>
            <person name="Kumar C."/>
            <person name="Miller M.L."/>
            <person name="Jensen L.J."/>
            <person name="Gnad F."/>
            <person name="Cox J."/>
            <person name="Jensen T.S."/>
            <person name="Nigg E.A."/>
            <person name="Brunak S."/>
            <person name="Mann M."/>
        </authorList>
    </citation>
    <scope>PHOSPHORYLATION [LARGE SCALE ANALYSIS] AT SER-153</scope>
    <scope>IDENTIFICATION BY MASS SPECTROMETRY [LARGE SCALE ANALYSIS]</scope>
    <source>
        <tissue>Cervix carcinoma</tissue>
    </source>
</reference>
<reference key="21">
    <citation type="journal article" date="2011" name="Sci. Signal.">
        <title>System-wide temporal characterization of the proteome and phosphoproteome of human embryonic stem cell differentiation.</title>
        <authorList>
            <person name="Rigbolt K.T."/>
            <person name="Prokhorova T.A."/>
            <person name="Akimov V."/>
            <person name="Henningsen J."/>
            <person name="Johansen P.T."/>
            <person name="Kratchmarova I."/>
            <person name="Kassem M."/>
            <person name="Mann M."/>
            <person name="Olsen J.V."/>
            <person name="Blagoev B."/>
        </authorList>
    </citation>
    <scope>IDENTIFICATION BY MASS SPECTROMETRY [LARGE SCALE ANALYSIS]</scope>
</reference>
<reference key="22">
    <citation type="journal article" date="2013" name="J. Proteome Res.">
        <title>Toward a comprehensive characterization of a human cancer cell phosphoproteome.</title>
        <authorList>
            <person name="Zhou H."/>
            <person name="Di Palma S."/>
            <person name="Preisinger C."/>
            <person name="Peng M."/>
            <person name="Polat A.N."/>
            <person name="Heck A.J."/>
            <person name="Mohammed S."/>
        </authorList>
    </citation>
    <scope>PHOSPHORYLATION [LARGE SCALE ANALYSIS] AT SER-153; SER-239; SER-311 AND SER-331</scope>
    <scope>IDENTIFICATION BY MASS SPECTROMETRY [LARGE SCALE ANALYSIS]</scope>
    <source>
        <tissue>Cervix carcinoma</tissue>
        <tissue>Erythroleukemia</tissue>
    </source>
</reference>
<reference key="23">
    <citation type="journal article" date="2014" name="J. Proteomics">
        <title>An enzyme assisted RP-RPLC approach for in-depth analysis of human liver phosphoproteome.</title>
        <authorList>
            <person name="Bian Y."/>
            <person name="Song C."/>
            <person name="Cheng K."/>
            <person name="Dong M."/>
            <person name="Wang F."/>
            <person name="Huang J."/>
            <person name="Sun D."/>
            <person name="Wang L."/>
            <person name="Ye M."/>
            <person name="Zou H."/>
        </authorList>
    </citation>
    <scope>PHOSPHORYLATION [LARGE SCALE ANALYSIS] AT SER-331</scope>
    <scope>IDENTIFICATION BY MASS SPECTROMETRY [LARGE SCALE ANALYSIS]</scope>
    <source>
        <tissue>Liver</tissue>
    </source>
</reference>
<reference key="24">
    <citation type="submission" date="2005-11" db="PDB data bank">
        <title>Solution structure of the PB1 domain of human protein kinase MEKK2B.</title>
        <authorList>
            <consortium name="RIKEN structural genomics initiative (RSGI)"/>
        </authorList>
    </citation>
    <scope>STRUCTURE BY NMR OF 43-132</scope>
</reference>
<reference key="25">
    <citation type="journal article" date="2007" name="Nature">
        <title>Patterns of somatic mutation in human cancer genomes.</title>
        <authorList>
            <person name="Greenman C."/>
            <person name="Stephens P."/>
            <person name="Smith R."/>
            <person name="Dalgliesh G.L."/>
            <person name="Hunter C."/>
            <person name="Bignell G."/>
            <person name="Davies H."/>
            <person name="Teague J."/>
            <person name="Butler A."/>
            <person name="Stevens C."/>
            <person name="Edkins S."/>
            <person name="O'Meara S."/>
            <person name="Vastrik I."/>
            <person name="Schmidt E.E."/>
            <person name="Avis T."/>
            <person name="Barthorpe S."/>
            <person name="Bhamra G."/>
            <person name="Buck G."/>
            <person name="Choudhury B."/>
            <person name="Clements J."/>
            <person name="Cole J."/>
            <person name="Dicks E."/>
            <person name="Forbes S."/>
            <person name="Gray K."/>
            <person name="Halliday K."/>
            <person name="Harrison R."/>
            <person name="Hills K."/>
            <person name="Hinton J."/>
            <person name="Jenkinson A."/>
            <person name="Jones D."/>
            <person name="Menzies A."/>
            <person name="Mironenko T."/>
            <person name="Perry J."/>
            <person name="Raine K."/>
            <person name="Richardson D."/>
            <person name="Shepherd R."/>
            <person name="Small A."/>
            <person name="Tofts C."/>
            <person name="Varian J."/>
            <person name="Webb T."/>
            <person name="West S."/>
            <person name="Widaa S."/>
            <person name="Yates A."/>
            <person name="Cahill D.P."/>
            <person name="Louis D.N."/>
            <person name="Goldstraw P."/>
            <person name="Nicholson A.G."/>
            <person name="Brasseur F."/>
            <person name="Looijenga L."/>
            <person name="Weber B.L."/>
            <person name="Chiew Y.-E."/>
            <person name="DeFazio A."/>
            <person name="Greaves M.F."/>
            <person name="Green A.R."/>
            <person name="Campbell P."/>
            <person name="Birney E."/>
            <person name="Easton D.F."/>
            <person name="Chenevix-Trench G."/>
            <person name="Tan M.-H."/>
            <person name="Khoo S.K."/>
            <person name="Teh B.T."/>
            <person name="Yuen S.T."/>
            <person name="Leung S.Y."/>
            <person name="Wooster R."/>
            <person name="Futreal P.A."/>
            <person name="Stratton M.R."/>
        </authorList>
    </citation>
    <scope>VARIANTS [LARGE SCALE ANALYSIS] VAL-110; ILE-112 AND GLY-140</scope>
</reference>
<organism>
    <name type="scientific">Homo sapiens</name>
    <name type="common">Human</name>
    <dbReference type="NCBI Taxonomy" id="9606"/>
    <lineage>
        <taxon>Eukaryota</taxon>
        <taxon>Metazoa</taxon>
        <taxon>Chordata</taxon>
        <taxon>Craniata</taxon>
        <taxon>Vertebrata</taxon>
        <taxon>Euteleostomi</taxon>
        <taxon>Mammalia</taxon>
        <taxon>Eutheria</taxon>
        <taxon>Euarchontoglires</taxon>
        <taxon>Primates</taxon>
        <taxon>Haplorrhini</taxon>
        <taxon>Catarrhini</taxon>
        <taxon>Hominidae</taxon>
        <taxon>Homo</taxon>
    </lineage>
</organism>
<evidence type="ECO:0000250" key="1"/>
<evidence type="ECO:0000250" key="2">
    <source>
        <dbReference type="UniProtKB" id="Q61083"/>
    </source>
</evidence>
<evidence type="ECO:0000255" key="3">
    <source>
        <dbReference type="PROSITE-ProRule" id="PRU00159"/>
    </source>
</evidence>
<evidence type="ECO:0000255" key="4">
    <source>
        <dbReference type="PROSITE-ProRule" id="PRU01081"/>
    </source>
</evidence>
<evidence type="ECO:0000256" key="5">
    <source>
        <dbReference type="SAM" id="MobiDB-lite"/>
    </source>
</evidence>
<evidence type="ECO:0000269" key="6">
    <source>
    </source>
</evidence>
<evidence type="ECO:0000269" key="7">
    <source>
    </source>
</evidence>
<evidence type="ECO:0000269" key="8">
    <source>
    </source>
</evidence>
<evidence type="ECO:0000269" key="9">
    <source>
    </source>
</evidence>
<evidence type="ECO:0000269" key="10">
    <source>
    </source>
</evidence>
<evidence type="ECO:0000269" key="11">
    <source>
    </source>
</evidence>
<evidence type="ECO:0000305" key="12"/>
<evidence type="ECO:0007744" key="13">
    <source>
    </source>
</evidence>
<evidence type="ECO:0007744" key="14">
    <source>
    </source>
</evidence>
<evidence type="ECO:0007744" key="15">
    <source>
    </source>
</evidence>
<evidence type="ECO:0007744" key="16">
    <source>
    </source>
</evidence>
<evidence type="ECO:0007744" key="17">
    <source>
    </source>
</evidence>
<evidence type="ECO:0007744" key="18">
    <source>
    </source>
</evidence>
<evidence type="ECO:0007744" key="19">
    <source>
    </source>
</evidence>
<evidence type="ECO:0007744" key="20">
    <source>
    </source>
</evidence>
<evidence type="ECO:0007829" key="21">
    <source>
        <dbReference type="PDB" id="2NPT"/>
    </source>
</evidence>
<evidence type="ECO:0007829" key="22">
    <source>
        <dbReference type="PDB" id="5EX0"/>
    </source>
</evidence>
<gene>
    <name type="primary">MAP3K2</name>
    <name type="synonym">MAPKKK2</name>
    <name type="synonym">MEKK2</name>
</gene>